<organism>
    <name type="scientific">Homo sapiens</name>
    <name type="common">Human</name>
    <dbReference type="NCBI Taxonomy" id="9606"/>
    <lineage>
        <taxon>Eukaryota</taxon>
        <taxon>Metazoa</taxon>
        <taxon>Chordata</taxon>
        <taxon>Craniata</taxon>
        <taxon>Vertebrata</taxon>
        <taxon>Euteleostomi</taxon>
        <taxon>Mammalia</taxon>
        <taxon>Eutheria</taxon>
        <taxon>Euarchontoglires</taxon>
        <taxon>Primates</taxon>
        <taxon>Haplorrhini</taxon>
        <taxon>Catarrhini</taxon>
        <taxon>Hominidae</taxon>
        <taxon>Homo</taxon>
    </lineage>
</organism>
<name>S19A3_HUMAN</name>
<dbReference type="EMBL" id="AF271633">
    <property type="protein sequence ID" value="AAG53879.1"/>
    <property type="molecule type" value="mRNA"/>
</dbReference>
<dbReference type="EMBL" id="AF283317">
    <property type="protein sequence ID" value="AAK69539.1"/>
    <property type="molecule type" value="mRNA"/>
</dbReference>
<dbReference type="EMBL" id="AC064853">
    <property type="protein sequence ID" value="AAX93157.1"/>
    <property type="molecule type" value="Genomic_DNA"/>
</dbReference>
<dbReference type="EMBL" id="BC032014">
    <property type="protein sequence ID" value="AAH32014.1"/>
    <property type="molecule type" value="mRNA"/>
</dbReference>
<dbReference type="CCDS" id="CCDS2468.1"/>
<dbReference type="RefSeq" id="NP_001358340.1">
    <property type="nucleotide sequence ID" value="NM_001371411.1"/>
</dbReference>
<dbReference type="RefSeq" id="NP_001358341.1">
    <property type="nucleotide sequence ID" value="NM_001371412.1"/>
</dbReference>
<dbReference type="RefSeq" id="NP_079519.1">
    <property type="nucleotide sequence ID" value="NM_025243.4"/>
</dbReference>
<dbReference type="RefSeq" id="XP_011510234.1">
    <property type="nucleotide sequence ID" value="XM_011511932.1"/>
</dbReference>
<dbReference type="RefSeq" id="XP_011510235.1">
    <property type="nucleotide sequence ID" value="XM_011511933.1"/>
</dbReference>
<dbReference type="PDB" id="8S4U">
    <property type="method" value="EM"/>
    <property type="resolution" value="3.09 A"/>
    <property type="chains" value="A=1-496"/>
</dbReference>
<dbReference type="PDB" id="8S5U">
    <property type="method" value="EM"/>
    <property type="resolution" value="3.28 A"/>
    <property type="chains" value="A=1-496"/>
</dbReference>
<dbReference type="PDB" id="8S5W">
    <property type="method" value="EM"/>
    <property type="resolution" value="3.05 A"/>
    <property type="chains" value="A=1-496"/>
</dbReference>
<dbReference type="PDB" id="8S5Z">
    <property type="method" value="EM"/>
    <property type="resolution" value="3.00 A"/>
    <property type="chains" value="A=1-496"/>
</dbReference>
<dbReference type="PDB" id="8S61">
    <property type="method" value="EM"/>
    <property type="resolution" value="3.53 A"/>
    <property type="chains" value="A=11-459"/>
</dbReference>
<dbReference type="PDB" id="8S62">
    <property type="method" value="EM"/>
    <property type="resolution" value="3.75 A"/>
    <property type="chains" value="A=1-496"/>
</dbReference>
<dbReference type="PDB" id="8XV2">
    <property type="method" value="EM"/>
    <property type="resolution" value="3.70 A"/>
    <property type="chains" value="A=11-496"/>
</dbReference>
<dbReference type="PDB" id="8XV5">
    <property type="method" value="EM"/>
    <property type="resolution" value="3.70 A"/>
    <property type="chains" value="A=11-496"/>
</dbReference>
<dbReference type="PDB" id="8XV9">
    <property type="method" value="EM"/>
    <property type="resolution" value="3.80 A"/>
    <property type="chains" value="A=11-496"/>
</dbReference>
<dbReference type="PDB" id="8Z7R">
    <property type="method" value="EM"/>
    <property type="resolution" value="3.15 A"/>
    <property type="chains" value="A=1-496"/>
</dbReference>
<dbReference type="PDB" id="8Z7S">
    <property type="method" value="EM"/>
    <property type="resolution" value="3.05 A"/>
    <property type="chains" value="A=1-496"/>
</dbReference>
<dbReference type="PDB" id="8Z7T">
    <property type="method" value="EM"/>
    <property type="resolution" value="3.39 A"/>
    <property type="chains" value="A=1-496"/>
</dbReference>
<dbReference type="PDB" id="8Z7U">
    <property type="method" value="EM"/>
    <property type="resolution" value="3.10 A"/>
    <property type="chains" value="A=1-496"/>
</dbReference>
<dbReference type="PDB" id="8Z7V">
    <property type="method" value="EM"/>
    <property type="resolution" value="3.10 A"/>
    <property type="chains" value="A=1-496"/>
</dbReference>
<dbReference type="PDB" id="8Z7W">
    <property type="method" value="EM"/>
    <property type="resolution" value="3.09 A"/>
    <property type="chains" value="A=1-496"/>
</dbReference>
<dbReference type="PDB" id="8Z7X">
    <property type="method" value="EM"/>
    <property type="resolution" value="3.36 A"/>
    <property type="chains" value="A=1-496"/>
</dbReference>
<dbReference type="PDB" id="8Z7Y">
    <property type="method" value="EM"/>
    <property type="resolution" value="3.02 A"/>
    <property type="chains" value="A=1-496"/>
</dbReference>
<dbReference type="PDB" id="9G5K">
    <property type="method" value="EM"/>
    <property type="resolution" value="2.87 A"/>
    <property type="chains" value="A=1-496"/>
</dbReference>
<dbReference type="PDBsum" id="8S4U"/>
<dbReference type="PDBsum" id="8S5U"/>
<dbReference type="PDBsum" id="8S5W"/>
<dbReference type="PDBsum" id="8S5Z"/>
<dbReference type="PDBsum" id="8S61"/>
<dbReference type="PDBsum" id="8S62"/>
<dbReference type="PDBsum" id="8XV2"/>
<dbReference type="PDBsum" id="8XV5"/>
<dbReference type="PDBsum" id="8XV9"/>
<dbReference type="PDBsum" id="8Z7R"/>
<dbReference type="PDBsum" id="8Z7S"/>
<dbReference type="PDBsum" id="8Z7T"/>
<dbReference type="PDBsum" id="8Z7U"/>
<dbReference type="PDBsum" id="8Z7V"/>
<dbReference type="PDBsum" id="8Z7W"/>
<dbReference type="PDBsum" id="8Z7X"/>
<dbReference type="PDBsum" id="8Z7Y"/>
<dbReference type="PDBsum" id="9G5K"/>
<dbReference type="EMDB" id="EMD-19716"/>
<dbReference type="EMDB" id="EMD-19750"/>
<dbReference type="EMDB" id="EMD-19752"/>
<dbReference type="EMDB" id="EMD-19753"/>
<dbReference type="EMDB" id="EMD-19754"/>
<dbReference type="EMDB" id="EMD-19755"/>
<dbReference type="EMDB" id="EMD-38691"/>
<dbReference type="EMDB" id="EMD-38692"/>
<dbReference type="EMDB" id="EMD-38693"/>
<dbReference type="EMDB" id="EMD-39825"/>
<dbReference type="EMDB" id="EMD-39826"/>
<dbReference type="EMDB" id="EMD-39827"/>
<dbReference type="EMDB" id="EMD-39828"/>
<dbReference type="EMDB" id="EMD-39829"/>
<dbReference type="EMDB" id="EMD-39830"/>
<dbReference type="EMDB" id="EMD-39831"/>
<dbReference type="EMDB" id="EMD-39832"/>
<dbReference type="EMDB" id="EMD-51088"/>
<dbReference type="SMR" id="Q9BZV2"/>
<dbReference type="BioGRID" id="123266">
    <property type="interactions" value="20"/>
</dbReference>
<dbReference type="FunCoup" id="Q9BZV2">
    <property type="interactions" value="566"/>
</dbReference>
<dbReference type="IntAct" id="Q9BZV2">
    <property type="interactions" value="17"/>
</dbReference>
<dbReference type="MINT" id="Q9BZV2"/>
<dbReference type="STRING" id="9606.ENSP00000495385"/>
<dbReference type="DrugBank" id="DB00152">
    <property type="generic name" value="Thiamine"/>
</dbReference>
<dbReference type="TCDB" id="2.A.48.1.4">
    <property type="family name" value="the reduced folate carrier (rfc) family"/>
</dbReference>
<dbReference type="GlyCosmos" id="Q9BZV2">
    <property type="glycosylation" value="2 sites, No reported glycans"/>
</dbReference>
<dbReference type="GlyGen" id="Q9BZV2">
    <property type="glycosylation" value="2 sites"/>
</dbReference>
<dbReference type="iPTMnet" id="Q9BZV2"/>
<dbReference type="PhosphoSitePlus" id="Q9BZV2"/>
<dbReference type="BioMuta" id="SLC19A3"/>
<dbReference type="DMDM" id="74733486"/>
<dbReference type="jPOST" id="Q9BZV2"/>
<dbReference type="MassIVE" id="Q9BZV2"/>
<dbReference type="PaxDb" id="9606-ENSP00000258403"/>
<dbReference type="PeptideAtlas" id="Q9BZV2"/>
<dbReference type="ProteomicsDB" id="79906"/>
<dbReference type="Antibodypedia" id="34387">
    <property type="antibodies" value="123 antibodies from 23 providers"/>
</dbReference>
<dbReference type="DNASU" id="80704"/>
<dbReference type="Ensembl" id="ENST00000258403.8">
    <property type="protein sequence ID" value="ENSP00000258403.3"/>
    <property type="gene ID" value="ENSG00000135917.16"/>
</dbReference>
<dbReference type="Ensembl" id="ENST00000644224.2">
    <property type="protein sequence ID" value="ENSP00000495385.1"/>
    <property type="gene ID" value="ENSG00000135917.16"/>
</dbReference>
<dbReference type="GeneID" id="80704"/>
<dbReference type="KEGG" id="hsa:80704"/>
<dbReference type="MANE-Select" id="ENST00000644224.2">
    <property type="protein sequence ID" value="ENSP00000495385.1"/>
    <property type="RefSeq nucleotide sequence ID" value="NM_025243.4"/>
    <property type="RefSeq protein sequence ID" value="NP_079519.1"/>
</dbReference>
<dbReference type="UCSC" id="uc002vpi.4">
    <property type="organism name" value="human"/>
</dbReference>
<dbReference type="AGR" id="HGNC:16266"/>
<dbReference type="CTD" id="80704"/>
<dbReference type="DisGeNET" id="80704"/>
<dbReference type="GeneCards" id="SLC19A3"/>
<dbReference type="GeneReviews" id="SLC19A3"/>
<dbReference type="HGNC" id="HGNC:16266">
    <property type="gene designation" value="SLC19A3"/>
</dbReference>
<dbReference type="HPA" id="ENSG00000135917">
    <property type="expression patterns" value="Tissue enhanced (adipose tissue, breast, placenta)"/>
</dbReference>
<dbReference type="MalaCards" id="SLC19A3"/>
<dbReference type="MIM" id="606152">
    <property type="type" value="gene"/>
</dbReference>
<dbReference type="MIM" id="607483">
    <property type="type" value="phenotype"/>
</dbReference>
<dbReference type="neXtProt" id="NX_Q9BZV2"/>
<dbReference type="OpenTargets" id="ENSG00000135917"/>
<dbReference type="Orphanet" id="65284">
    <property type="disease" value="Biotin-thiamine-responsive basal ganglia disease"/>
</dbReference>
<dbReference type="Orphanet" id="263410">
    <property type="disease" value="Infantile spasms-psychomotor retardation-progressive brain atrophy-basal ganglia disease syndrome"/>
</dbReference>
<dbReference type="Orphanet" id="199348">
    <property type="disease" value="Thiamine-responsive encephalopathy"/>
</dbReference>
<dbReference type="PharmGKB" id="PA38397"/>
<dbReference type="VEuPathDB" id="HostDB:ENSG00000135917"/>
<dbReference type="eggNOG" id="KOG3810">
    <property type="taxonomic scope" value="Eukaryota"/>
</dbReference>
<dbReference type="GeneTree" id="ENSGT00950000183022"/>
<dbReference type="HOGENOM" id="CLU_036909_0_1_1"/>
<dbReference type="InParanoid" id="Q9BZV2"/>
<dbReference type="OMA" id="DIWACYA"/>
<dbReference type="OrthoDB" id="18814at2759"/>
<dbReference type="PAN-GO" id="Q9BZV2">
    <property type="GO annotations" value="3 GO annotations based on evolutionary models"/>
</dbReference>
<dbReference type="PhylomeDB" id="Q9BZV2"/>
<dbReference type="TreeFam" id="TF313684"/>
<dbReference type="PathwayCommons" id="Q9BZV2"/>
<dbReference type="Reactome" id="R-HSA-196819">
    <property type="pathway name" value="Vitamin B1 (thiamin) metabolism"/>
</dbReference>
<dbReference type="SignaLink" id="Q9BZV2"/>
<dbReference type="SIGNOR" id="Q9BZV2"/>
<dbReference type="BioGRID-ORCS" id="80704">
    <property type="hits" value="8 hits in 1153 CRISPR screens"/>
</dbReference>
<dbReference type="ChiTaRS" id="SLC19A3">
    <property type="organism name" value="human"/>
</dbReference>
<dbReference type="GeneWiki" id="SLC19A3"/>
<dbReference type="GenomeRNAi" id="80704"/>
<dbReference type="Pharos" id="Q9BZV2">
    <property type="development level" value="Tbio"/>
</dbReference>
<dbReference type="PRO" id="PR:Q9BZV2"/>
<dbReference type="Proteomes" id="UP000005640">
    <property type="component" value="Chromosome 2"/>
</dbReference>
<dbReference type="RNAct" id="Q9BZV2">
    <property type="molecule type" value="protein"/>
</dbReference>
<dbReference type="Bgee" id="ENSG00000135917">
    <property type="expression patterns" value="Expressed in subcutaneous adipose tissue and 113 other cell types or tissues"/>
</dbReference>
<dbReference type="ExpressionAtlas" id="Q9BZV2">
    <property type="expression patterns" value="baseline and differential"/>
</dbReference>
<dbReference type="GO" id="GO:0016020">
    <property type="term" value="C:membrane"/>
    <property type="evidence" value="ECO:0000303"/>
    <property type="project" value="UniProtKB"/>
</dbReference>
<dbReference type="GO" id="GO:0005886">
    <property type="term" value="C:plasma membrane"/>
    <property type="evidence" value="ECO:0000318"/>
    <property type="project" value="GO_Central"/>
</dbReference>
<dbReference type="GO" id="GO:0015234">
    <property type="term" value="F:thiamine transmembrane transporter activity"/>
    <property type="evidence" value="ECO:0000250"/>
    <property type="project" value="BHF-UCL"/>
</dbReference>
<dbReference type="GO" id="GO:0031923">
    <property type="term" value="P:pyridoxine transport"/>
    <property type="evidence" value="ECO:0000314"/>
    <property type="project" value="UniProtKB"/>
</dbReference>
<dbReference type="GO" id="GO:0009229">
    <property type="term" value="P:thiamine diphosphate biosynthetic process"/>
    <property type="evidence" value="ECO:0007669"/>
    <property type="project" value="Ensembl"/>
</dbReference>
<dbReference type="GO" id="GO:0071934">
    <property type="term" value="P:thiamine transmembrane transport"/>
    <property type="evidence" value="ECO:0000250"/>
    <property type="project" value="BHF-UCL"/>
</dbReference>
<dbReference type="GO" id="GO:0015888">
    <property type="term" value="P:thiamine transport"/>
    <property type="evidence" value="ECO:0000314"/>
    <property type="project" value="UniProtKB"/>
</dbReference>
<dbReference type="GO" id="GO:0042723">
    <property type="term" value="P:thiamine-containing compound metabolic process"/>
    <property type="evidence" value="ECO:0000304"/>
    <property type="project" value="Reactome"/>
</dbReference>
<dbReference type="GO" id="GO:0055085">
    <property type="term" value="P:transmembrane transport"/>
    <property type="evidence" value="ECO:0000318"/>
    <property type="project" value="GO_Central"/>
</dbReference>
<dbReference type="Gene3D" id="1.20.1250.20">
    <property type="entry name" value="MFS general substrate transporter like domains"/>
    <property type="match status" value="1"/>
</dbReference>
<dbReference type="InterPro" id="IPR002666">
    <property type="entry name" value="Folate_carrier"/>
</dbReference>
<dbReference type="InterPro" id="IPR036259">
    <property type="entry name" value="MFS_trans_sf"/>
</dbReference>
<dbReference type="InterPro" id="IPR028337">
    <property type="entry name" value="ThTr-2"/>
</dbReference>
<dbReference type="NCBIfam" id="TIGR00806">
    <property type="entry name" value="rfc"/>
    <property type="match status" value="1"/>
</dbReference>
<dbReference type="PANTHER" id="PTHR10686">
    <property type="entry name" value="FOLATE TRANSPORTER"/>
    <property type="match status" value="1"/>
</dbReference>
<dbReference type="PANTHER" id="PTHR10686:SF37">
    <property type="entry name" value="THIAMINE TRANSPORTER 2"/>
    <property type="match status" value="1"/>
</dbReference>
<dbReference type="Pfam" id="PF01770">
    <property type="entry name" value="Folate_carrier"/>
    <property type="match status" value="1"/>
</dbReference>
<dbReference type="PIRSF" id="PIRSF028739">
    <property type="entry name" value="Folate_carrier"/>
    <property type="match status" value="1"/>
</dbReference>
<dbReference type="PIRSF" id="PIRSF500795">
    <property type="entry name" value="Thiamine_transporter_2"/>
    <property type="match status" value="1"/>
</dbReference>
<dbReference type="SUPFAM" id="SSF103473">
    <property type="entry name" value="MFS general substrate transporter"/>
    <property type="match status" value="1"/>
</dbReference>
<protein>
    <recommendedName>
        <fullName>Thiamine transporter 2</fullName>
        <shortName>ThTr-2</shortName>
        <shortName>ThTr2</shortName>
    </recommendedName>
    <alternativeName>
        <fullName>Solute carrier family 19 member 3</fullName>
    </alternativeName>
</protein>
<gene>
    <name type="primary">SLC19A3</name>
</gene>
<proteinExistence type="evidence at protein level"/>
<feature type="chain" id="PRO_0000232656" description="Thiamine transporter 2">
    <location>
        <begin position="1"/>
        <end position="496"/>
    </location>
</feature>
<feature type="topological domain" description="Cytoplasmic" evidence="1">
    <location>
        <begin position="1"/>
        <end position="7"/>
    </location>
</feature>
<feature type="transmembrane region" description="Helical" evidence="1">
    <location>
        <begin position="8"/>
        <end position="28"/>
    </location>
</feature>
<feature type="topological domain" description="Extracellular" evidence="1">
    <location>
        <begin position="29"/>
        <end position="53"/>
    </location>
</feature>
<feature type="transmembrane region" description="Helical" evidence="1">
    <location>
        <begin position="54"/>
        <end position="74"/>
    </location>
</feature>
<feature type="topological domain" description="Cytoplasmic" evidence="1">
    <location>
        <begin position="75"/>
        <end position="81"/>
    </location>
</feature>
<feature type="transmembrane region" description="Helical" evidence="1">
    <location>
        <begin position="82"/>
        <end position="102"/>
    </location>
</feature>
<feature type="topological domain" description="Extracellular" evidence="1">
    <location>
        <begin position="103"/>
        <end position="110"/>
    </location>
</feature>
<feature type="transmembrane region" description="Helical" evidence="1">
    <location>
        <begin position="111"/>
        <end position="131"/>
    </location>
</feature>
<feature type="topological domain" description="Cytoplasmic" evidence="1">
    <location>
        <begin position="132"/>
        <end position="144"/>
    </location>
</feature>
<feature type="transmembrane region" description="Helical" evidence="1">
    <location>
        <begin position="145"/>
        <end position="165"/>
    </location>
</feature>
<feature type="topological domain" description="Extracellular" evidence="1">
    <location>
        <begin position="166"/>
        <end position="169"/>
    </location>
</feature>
<feature type="transmembrane region" description="Helical" evidence="1">
    <location>
        <begin position="170"/>
        <end position="190"/>
    </location>
</feature>
<feature type="topological domain" description="Cytoplasmic" evidence="1">
    <location>
        <begin position="191"/>
        <end position="282"/>
    </location>
</feature>
<feature type="transmembrane region" description="Helical" evidence="1">
    <location>
        <begin position="283"/>
        <end position="303"/>
    </location>
</feature>
<feature type="topological domain" description="Extracellular" evidence="1">
    <location>
        <begin position="304"/>
        <end position="316"/>
    </location>
</feature>
<feature type="transmembrane region" description="Helical" evidence="1">
    <location>
        <begin position="317"/>
        <end position="337"/>
    </location>
</feature>
<feature type="topological domain" description="Cytoplasmic" evidence="1">
    <location>
        <begin position="338"/>
        <end position="342"/>
    </location>
</feature>
<feature type="transmembrane region" description="Helical" evidence="1">
    <location>
        <begin position="343"/>
        <end position="363"/>
    </location>
</feature>
<feature type="topological domain" description="Extracellular" evidence="1">
    <location>
        <begin position="364"/>
        <end position="375"/>
    </location>
</feature>
<feature type="transmembrane region" description="Helical" evidence="1">
    <location>
        <begin position="376"/>
        <end position="396"/>
    </location>
</feature>
<feature type="topological domain" description="Cytoplasmic" evidence="1">
    <location>
        <begin position="397"/>
        <end position="405"/>
    </location>
</feature>
<feature type="transmembrane region" description="Helical" evidence="1">
    <location>
        <begin position="406"/>
        <end position="426"/>
    </location>
</feature>
<feature type="topological domain" description="Extracellular" evidence="1">
    <location>
        <begin position="427"/>
        <end position="434"/>
    </location>
</feature>
<feature type="transmembrane region" description="Helical" evidence="1">
    <location>
        <begin position="435"/>
        <end position="455"/>
    </location>
</feature>
<feature type="topological domain" description="Cytoplasmic" evidence="1">
    <location>
        <begin position="456"/>
        <end position="496"/>
    </location>
</feature>
<feature type="region of interest" description="Disordered" evidence="2">
    <location>
        <begin position="468"/>
        <end position="496"/>
    </location>
</feature>
<feature type="site" description="Essential for pyridoxine transport" evidence="9">
    <location>
        <position position="86"/>
    </location>
</feature>
<feature type="site" description="Essential for pyridoxine transport" evidence="9">
    <location>
        <position position="87"/>
    </location>
</feature>
<feature type="site" description="Essential for pyridoxine transport" evidence="9">
    <location>
        <position position="91"/>
    </location>
</feature>
<feature type="site" description="Essential for pyridoxine transport" evidence="9">
    <location>
        <position position="93"/>
    </location>
</feature>
<feature type="site" description="Essential for pyridoxine transport" evidence="9">
    <location>
        <position position="94"/>
    </location>
</feature>
<feature type="site" description="Essential for pyridoxine transport" evidence="9">
    <location>
        <position position="168"/>
    </location>
</feature>
<feature type="site" description="Essential for pyridoxine transport" evidence="9">
    <location>
        <position position="173"/>
    </location>
</feature>
<feature type="glycosylation site" description="N-linked (GlcNAc...) asparagine" evidence="6">
    <location>
        <position position="45"/>
    </location>
</feature>
<feature type="glycosylation site" description="N-linked (GlcNAc...) asparagine" evidence="1">
    <location>
        <position position="166"/>
    </location>
</feature>
<feature type="sequence variant" id="VAR_025992" description="In BTBGD; dbSNP:rs121917882." evidence="5">
    <original>G</original>
    <variation>V</variation>
    <location>
        <position position="23"/>
    </location>
</feature>
<feature type="sequence variant" id="VAR_061864" description="In dbSNP:rs59736804.">
    <original>V</original>
    <variation>I</variation>
    <location>
        <position position="174"/>
    </location>
</feature>
<feature type="sequence variant" id="VAR_052405" description="In dbSNP:rs34507036.">
    <original>V</original>
    <variation>A</variation>
    <location>
        <position position="350"/>
    </location>
</feature>
<feature type="sequence variant" id="VAR_025993" description="In BTBGD; dbSNP:rs121917884." evidence="5">
    <original>T</original>
    <variation>A</variation>
    <location>
        <position position="422"/>
    </location>
</feature>
<feature type="mutagenesis site" description="Significant decrease in pyridoxine transport." evidence="9">
    <original>Q</original>
    <variation>H</variation>
    <location>
        <position position="86"/>
    </location>
</feature>
<feature type="mutagenesis site" description="Significant decrease in pyridoxine transport." evidence="9">
    <original>G</original>
    <variation>V</variation>
    <location>
        <position position="87"/>
    </location>
</feature>
<feature type="mutagenesis site" description="Significant decrease in pyridoxine transport." evidence="9">
    <original>I</original>
    <variation>A</variation>
    <location>
        <position position="91"/>
    </location>
</feature>
<feature type="mutagenesis site" description="Significant decrease in pyridoxine transport." evidence="9">
    <original>T</original>
    <variation>S</variation>
    <location>
        <position position="93"/>
    </location>
</feature>
<feature type="mutagenesis site" description="Significant decrease in pyridoxine transport." evidence="9">
    <original>W</original>
    <variation>Y</variation>
    <location>
        <position position="94"/>
    </location>
</feature>
<feature type="mutagenesis site" description="Significant decrease in pyridoxine transport." evidence="9">
    <original>S</original>
    <variation>P</variation>
    <location>
        <position position="168"/>
    </location>
</feature>
<feature type="mutagenesis site" description="Significant decrease in pyridoxine transport." evidence="9">
    <original>N</original>
    <variation>F</variation>
    <location>
        <position position="173"/>
    </location>
</feature>
<feature type="helix" evidence="13">
    <location>
        <begin position="13"/>
        <end position="27"/>
    </location>
</feature>
<feature type="helix" evidence="13">
    <location>
        <begin position="32"/>
        <end position="34"/>
    </location>
</feature>
<feature type="helix" evidence="13">
    <location>
        <begin position="35"/>
        <end position="39"/>
    </location>
</feature>
<feature type="turn" evidence="13">
    <location>
        <begin position="42"/>
        <end position="44"/>
    </location>
</feature>
<feature type="helix" evidence="13">
    <location>
        <begin position="48"/>
        <end position="53"/>
    </location>
</feature>
<feature type="turn" evidence="13">
    <location>
        <begin position="54"/>
        <end position="56"/>
    </location>
</feature>
<feature type="helix" evidence="13">
    <location>
        <begin position="57"/>
        <end position="76"/>
    </location>
</feature>
<feature type="helix" evidence="13">
    <location>
        <begin position="80"/>
        <end position="99"/>
    </location>
</feature>
<feature type="strand" evidence="12">
    <location>
        <begin position="100"/>
        <end position="102"/>
    </location>
</feature>
<feature type="helix" evidence="13">
    <location>
        <begin position="103"/>
        <end position="118"/>
    </location>
</feature>
<feature type="helix" evidence="13">
    <location>
        <begin position="120"/>
        <end position="130"/>
    </location>
</feature>
<feature type="helix" evidence="13">
    <location>
        <begin position="133"/>
        <end position="135"/>
    </location>
</feature>
<feature type="helix" evidence="13">
    <location>
        <begin position="136"/>
        <end position="163"/>
    </location>
</feature>
<feature type="helix" evidence="13">
    <location>
        <begin position="169"/>
        <end position="187"/>
    </location>
</feature>
<feature type="strand" evidence="12">
    <location>
        <begin position="197"/>
        <end position="199"/>
    </location>
</feature>
<feature type="helix" evidence="13">
    <location>
        <begin position="272"/>
        <end position="274"/>
    </location>
</feature>
<feature type="helix" evidence="13">
    <location>
        <begin position="276"/>
        <end position="306"/>
    </location>
</feature>
<feature type="turn" evidence="13">
    <location>
        <begin position="309"/>
        <end position="311"/>
    </location>
</feature>
<feature type="helix" evidence="13">
    <location>
        <begin position="316"/>
        <end position="336"/>
    </location>
</feature>
<feature type="helix" evidence="13">
    <location>
        <begin position="341"/>
        <end position="365"/>
    </location>
</feature>
<feature type="helix" evidence="13">
    <location>
        <begin position="369"/>
        <end position="394"/>
    </location>
</feature>
<feature type="helix" evidence="13">
    <location>
        <begin position="400"/>
        <end position="424"/>
    </location>
</feature>
<feature type="turn" evidence="13">
    <location>
        <begin position="428"/>
        <end position="431"/>
    </location>
</feature>
<feature type="helix" evidence="13">
    <location>
        <begin position="435"/>
        <end position="454"/>
    </location>
</feature>
<accession>Q9BZV2</accession>
<sequence>MDCYRTSLSSSWIYPTVILCLFGFFSMMRPSEPFLIPYLSGPDKNLTSAEITNEIFPVWTYSYLVLLLPVFVLTDYVRYKPVIILQGISFIITWLLLLFGQGVKTMQVVEFFYGMVTAAEVAYYAYIYSVVSPEHYQRVSGYCRSVTLAAYTAGSVLAQLLVSLANMSYFYLNVISLASVSVAFLFSLFLPMPKKSMFFHAKPSREIKKSSSVNPVLEETHEGEAPGCEEQKPTSEILSTSGKLNKGQLNSLKPSNVTVDVFVQWFQDLKECYSSKRLFYWSLWWAFATAGFNQVLNYVQILWDYKAPSQDSSIYNGAVEAIATFGGAVAAFAVGYVKVNWDLLGELALVVFSVVNAGSLFLMHYTANIWACYAGYLIFKSSYMLLITIAVFQIAVNLNVERYALVFGINTFIALVIQTIMTVIVVDQRGLNLPVSIQFLVYGSYFAVIAGIFLMRSMYITYSTKSQKDVQSPAPSENPDVSHPEEESNIIMSTKL</sequence>
<reference key="1">
    <citation type="journal article" date="2000" name="Mol. Genet. Metab.">
        <title>Identification and characterization of the human and mouse SLC19A3 gene: a novel member of the reduced folate family of micronutrient transporter genes.</title>
        <authorList>
            <person name="Eudy J.D."/>
            <person name="Spiegelstein O."/>
            <person name="Barber R.C."/>
            <person name="Wlodarczyk B.J."/>
            <person name="Talbot J."/>
            <person name="Finnell R.H."/>
        </authorList>
    </citation>
    <scope>NUCLEOTIDE SEQUENCE [MRNA]</scope>
    <scope>TISSUE SPECIFICITY</scope>
    <source>
        <tissue>Placenta</tissue>
    </source>
</reference>
<reference key="2">
    <citation type="submission" date="2000-06" db="EMBL/GenBank/DDBJ databases">
        <title>Molecular cloning of an orphan transporter: a new member of the folate transporter gene family.</title>
        <authorList>
            <person name="Wang H."/>
            <person name="Huang W."/>
            <person name="Srinivas S.R."/>
            <person name="Sugawara M."/>
            <person name="Devoe L.D."/>
            <person name="Leibach F.H."/>
            <person name="Ganapathy V."/>
            <person name="Prasad P.D."/>
        </authorList>
    </citation>
    <scope>NUCLEOTIDE SEQUENCE [MRNA]</scope>
    <source>
        <tissue>Placenta</tissue>
    </source>
</reference>
<reference key="3">
    <citation type="journal article" date="2005" name="Nature">
        <title>Generation and annotation of the DNA sequences of human chromosomes 2 and 4.</title>
        <authorList>
            <person name="Hillier L.W."/>
            <person name="Graves T.A."/>
            <person name="Fulton R.S."/>
            <person name="Fulton L.A."/>
            <person name="Pepin K.H."/>
            <person name="Minx P."/>
            <person name="Wagner-McPherson C."/>
            <person name="Layman D."/>
            <person name="Wylie K."/>
            <person name="Sekhon M."/>
            <person name="Becker M.C."/>
            <person name="Fewell G.A."/>
            <person name="Delehaunty K.D."/>
            <person name="Miner T.L."/>
            <person name="Nash W.E."/>
            <person name="Kremitzki C."/>
            <person name="Oddy L."/>
            <person name="Du H."/>
            <person name="Sun H."/>
            <person name="Bradshaw-Cordum H."/>
            <person name="Ali J."/>
            <person name="Carter J."/>
            <person name="Cordes M."/>
            <person name="Harris A."/>
            <person name="Isak A."/>
            <person name="van Brunt A."/>
            <person name="Nguyen C."/>
            <person name="Du F."/>
            <person name="Courtney L."/>
            <person name="Kalicki J."/>
            <person name="Ozersky P."/>
            <person name="Abbott S."/>
            <person name="Armstrong J."/>
            <person name="Belter E.A."/>
            <person name="Caruso L."/>
            <person name="Cedroni M."/>
            <person name="Cotton M."/>
            <person name="Davidson T."/>
            <person name="Desai A."/>
            <person name="Elliott G."/>
            <person name="Erb T."/>
            <person name="Fronick C."/>
            <person name="Gaige T."/>
            <person name="Haakenson W."/>
            <person name="Haglund K."/>
            <person name="Holmes A."/>
            <person name="Harkins R."/>
            <person name="Kim K."/>
            <person name="Kruchowski S.S."/>
            <person name="Strong C.M."/>
            <person name="Grewal N."/>
            <person name="Goyea E."/>
            <person name="Hou S."/>
            <person name="Levy A."/>
            <person name="Martinka S."/>
            <person name="Mead K."/>
            <person name="McLellan M.D."/>
            <person name="Meyer R."/>
            <person name="Randall-Maher J."/>
            <person name="Tomlinson C."/>
            <person name="Dauphin-Kohlberg S."/>
            <person name="Kozlowicz-Reilly A."/>
            <person name="Shah N."/>
            <person name="Swearengen-Shahid S."/>
            <person name="Snider J."/>
            <person name="Strong J.T."/>
            <person name="Thompson J."/>
            <person name="Yoakum M."/>
            <person name="Leonard S."/>
            <person name="Pearman C."/>
            <person name="Trani L."/>
            <person name="Radionenko M."/>
            <person name="Waligorski J.E."/>
            <person name="Wang C."/>
            <person name="Rock S.M."/>
            <person name="Tin-Wollam A.-M."/>
            <person name="Maupin R."/>
            <person name="Latreille P."/>
            <person name="Wendl M.C."/>
            <person name="Yang S.-P."/>
            <person name="Pohl C."/>
            <person name="Wallis J.W."/>
            <person name="Spieth J."/>
            <person name="Bieri T.A."/>
            <person name="Berkowicz N."/>
            <person name="Nelson J.O."/>
            <person name="Osborne J."/>
            <person name="Ding L."/>
            <person name="Meyer R."/>
            <person name="Sabo A."/>
            <person name="Shotland Y."/>
            <person name="Sinha P."/>
            <person name="Wohldmann P.E."/>
            <person name="Cook L.L."/>
            <person name="Hickenbotham M.T."/>
            <person name="Eldred J."/>
            <person name="Williams D."/>
            <person name="Jones T.A."/>
            <person name="She X."/>
            <person name="Ciccarelli F.D."/>
            <person name="Izaurralde E."/>
            <person name="Taylor J."/>
            <person name="Schmutz J."/>
            <person name="Myers R.M."/>
            <person name="Cox D.R."/>
            <person name="Huang X."/>
            <person name="McPherson J.D."/>
            <person name="Mardis E.R."/>
            <person name="Clifton S.W."/>
            <person name="Warren W.C."/>
            <person name="Chinwalla A.T."/>
            <person name="Eddy S.R."/>
            <person name="Marra M.A."/>
            <person name="Ovcharenko I."/>
            <person name="Furey T.S."/>
            <person name="Miller W."/>
            <person name="Eichler E.E."/>
            <person name="Bork P."/>
            <person name="Suyama M."/>
            <person name="Torrents D."/>
            <person name="Waterston R.H."/>
            <person name="Wilson R.K."/>
        </authorList>
    </citation>
    <scope>NUCLEOTIDE SEQUENCE [LARGE SCALE GENOMIC DNA]</scope>
</reference>
<reference key="4">
    <citation type="journal article" date="2004" name="Genome Res.">
        <title>The status, quality, and expansion of the NIH full-length cDNA project: the Mammalian Gene Collection (MGC).</title>
        <authorList>
            <consortium name="The MGC Project Team"/>
        </authorList>
    </citation>
    <scope>NUCLEOTIDE SEQUENCE [LARGE SCALE MRNA]</scope>
    <source>
        <tissue>Brain</tissue>
    </source>
</reference>
<reference key="5">
    <citation type="journal article" date="2001" name="Biochim. Biophys. Acta">
        <title>SLC19A3 encodes a second thiamine transporter ThTr2.</title>
        <authorList>
            <person name="Rajgopal A."/>
            <person name="Edmondnson A."/>
            <person name="Goldman I.D."/>
            <person name="Zhao R."/>
        </authorList>
    </citation>
    <scope>FUNCTION</scope>
    <scope>TRANSPORTER ACTIVITY</scope>
    <scope>BIOPHYSICOCHEMICAL PROPERTIES</scope>
</reference>
<reference key="6">
    <citation type="journal article" date="2004" name="Pflugers Arch.">
        <title>SLC19: the folate/thiamine transporter family.</title>
        <authorList>
            <person name="Ganapathy V."/>
            <person name="Smith S.B."/>
            <person name="Prasad P.D."/>
        </authorList>
    </citation>
    <scope>REVIEW</scope>
</reference>
<reference key="7">
    <citation type="journal article" date="2009" name="J. Proteome Res.">
        <title>Glycoproteomics analysis of human liver tissue by combination of multiple enzyme digestion and hydrazide chemistry.</title>
        <authorList>
            <person name="Chen R."/>
            <person name="Jiang X."/>
            <person name="Sun D."/>
            <person name="Han G."/>
            <person name="Wang F."/>
            <person name="Ye M."/>
            <person name="Wang L."/>
            <person name="Zou H."/>
        </authorList>
    </citation>
    <scope>GLYCOSYLATION [LARGE SCALE ANALYSIS] AT ASN-45</scope>
    <source>
        <tissue>Liver</tissue>
    </source>
</reference>
<reference key="8">
    <citation type="journal article" date="2014" name="J. Proteomics">
        <title>An enzyme assisted RP-RPLC approach for in-depth analysis of human liver phosphoproteome.</title>
        <authorList>
            <person name="Bian Y."/>
            <person name="Song C."/>
            <person name="Cheng K."/>
            <person name="Dong M."/>
            <person name="Wang F."/>
            <person name="Huang J."/>
            <person name="Sun D."/>
            <person name="Wang L."/>
            <person name="Ye M."/>
            <person name="Zou H."/>
        </authorList>
    </citation>
    <scope>IDENTIFICATION BY MASS SPECTROMETRY [LARGE SCALE ANALYSIS]</scope>
    <source>
        <tissue>Liver</tissue>
    </source>
</reference>
<reference key="9">
    <citation type="journal article" date="2020" name="J. Biol. Chem.">
        <title>pH-dependent pyridoxine transport by SLC19A2 and SLC19A3: Implications for absorption in acidic microclimates.</title>
        <authorList>
            <person name="Yamashiro T."/>
            <person name="Yasujima T."/>
            <person name="Said H.M."/>
            <person name="Yuasa H."/>
        </authorList>
    </citation>
    <scope>FUNCTION</scope>
    <scope>TRANSPORTER ACTIVITY</scope>
    <scope>BIOPHYSICOCHEMICAL PROPERTIES</scope>
    <scope>ACTIVITY REGULATION</scope>
</reference>
<reference key="10">
    <citation type="journal article" date="2022" name="Drug Metab. Pharmacokinet.">
        <title>Animal species differences in the pyridoxine transport function of SLC19A3: Absence of Slc19a3-mediated pyridoxine uptake in the rat small intestine.</title>
        <authorList>
            <person name="Yamashiro T."/>
            <person name="Yasujima T."/>
            <person name="Yuasa H."/>
        </authorList>
    </citation>
    <scope>FUNCTION</scope>
    <scope>TRANSPORTER ACTIVITY</scope>
</reference>
<reference key="11">
    <citation type="journal article" date="2022" name="J. Biol. Chem.">
        <title>Identification of the amino acid residues involved in the species-dependent differences in the pyridoxine transport function of SLC19A3.</title>
        <authorList>
            <person name="Miyake K."/>
            <person name="Yasujima T."/>
            <person name="Takahashi S."/>
            <person name="Yamashiro T."/>
            <person name="Yuasa H."/>
        </authorList>
    </citation>
    <scope>FUNCTION</scope>
    <scope>TRANSPORTER ACTIVITY</scope>
    <scope>MUTAGENESIS OF GLN-86; GLY-87; ILE-91; THR-93; TRP-94; SER-168 AND ASN-173</scope>
    <scope>SITE</scope>
</reference>
<reference key="12">
    <citation type="journal article" date="2023" name="Life. Sci Alliance">
        <title>Disrupted in renal carcinoma 2 (DIRC2/SLC49A4) is an H+-driven lysosomal pyridoxine exporter.</title>
        <authorList>
            <person name="Akino S."/>
            <person name="Yasujima T."/>
            <person name="Yamashiro T."/>
            <person name="Yuasa H."/>
        </authorList>
    </citation>
    <scope>FUNCTION</scope>
    <scope>TRANSPORTER ACTIVITY</scope>
    <scope>BIOPHYSICOCHEMICAL PROPERTIES</scope>
</reference>
<reference key="13">
    <citation type="journal article" date="2005" name="Am. J. Hum. Genet.">
        <title>Biotin-responsive basal ganglia disease maps to 2q36.3 and is due to mutations in SLC19A3.</title>
        <authorList>
            <person name="Zeng W.-Q."/>
            <person name="Al-Yamani E."/>
            <person name="Acierno J.S. Jr."/>
            <person name="Slaugenhaupt S.A."/>
            <person name="Gillis T."/>
            <person name="MacDonald M.E."/>
            <person name="Ozand P.T."/>
            <person name="Gusella J.F."/>
        </authorList>
    </citation>
    <scope>VARIANTS BTBGD VAL-23 AND ALA-422</scope>
    <scope>TISSUE SPECIFICITY</scope>
    <scope>INVOLVEMENT IN BTBGD</scope>
</reference>
<evidence type="ECO:0000255" key="1"/>
<evidence type="ECO:0000256" key="2">
    <source>
        <dbReference type="SAM" id="MobiDB-lite"/>
    </source>
</evidence>
<evidence type="ECO:0000269" key="3">
    <source>
    </source>
</evidence>
<evidence type="ECO:0000269" key="4">
    <source>
    </source>
</evidence>
<evidence type="ECO:0000269" key="5">
    <source>
    </source>
</evidence>
<evidence type="ECO:0000269" key="6">
    <source>
    </source>
</evidence>
<evidence type="ECO:0000269" key="7">
    <source>
    </source>
</evidence>
<evidence type="ECO:0000269" key="8">
    <source>
    </source>
</evidence>
<evidence type="ECO:0000269" key="9">
    <source>
    </source>
</evidence>
<evidence type="ECO:0000269" key="10">
    <source>
    </source>
</evidence>
<evidence type="ECO:0000305" key="11"/>
<evidence type="ECO:0007829" key="12">
    <source>
        <dbReference type="PDB" id="8S5W"/>
    </source>
</evidence>
<evidence type="ECO:0007829" key="13">
    <source>
        <dbReference type="PDB" id="9G5K"/>
    </source>
</evidence>
<keyword id="KW-0002">3D-structure</keyword>
<keyword id="KW-0225">Disease variant</keyword>
<keyword id="KW-0325">Glycoprotein</keyword>
<keyword id="KW-0472">Membrane</keyword>
<keyword id="KW-1267">Proteomics identification</keyword>
<keyword id="KW-1185">Reference proteome</keyword>
<keyword id="KW-0812">Transmembrane</keyword>
<keyword id="KW-1133">Transmembrane helix</keyword>
<keyword id="KW-0813">Transport</keyword>
<comment type="function">
    <text evidence="4 7 8 9 10">Mediates high affinity thiamine uptake, probably via a proton anti-port mechanism (PubMed:11731220, PubMed:33008889, PubMed:35512554, PubMed:35724964). Has no folate transport activity (PubMed:11731220). Mediates H(+)-dependent pyridoxine transport (PubMed:33008889, PubMed:35512554, PubMed:35724964, PubMed:36456177).</text>
</comment>
<comment type="catalytic activity">
    <reaction evidence="4 7 8 9">
        <text>thiamine(out) + H(+)(in) = thiamine(in) + H(+)(out)</text>
        <dbReference type="Rhea" id="RHEA:71271"/>
        <dbReference type="ChEBI" id="CHEBI:15378"/>
        <dbReference type="ChEBI" id="CHEBI:18385"/>
    </reaction>
</comment>
<comment type="catalytic activity">
    <reaction evidence="7 8 9 10">
        <text>pyridoxine(out) + n H(+)(out) = pyridoxine(in) + n H(+)(in)</text>
        <dbReference type="Rhea" id="RHEA:76203"/>
        <dbReference type="ChEBI" id="CHEBI:15378"/>
        <dbReference type="ChEBI" id="CHEBI:16709"/>
    </reaction>
</comment>
<comment type="activity regulation">
    <text evidence="7">Pyridoxine transport is inhibited by carbonyl cyanide p-trifluoromethoxyphenylhydrazone (FCCP) and carbonyl cyanide m-chlorophenylhydrazone (CCCP).</text>
</comment>
<comment type="biophysicochemical properties">
    <kinetics>
        <KM evidence="10">20 uM for pyridoxine</KM>
        <KM evidence="7">18.5 uM for pyridoxine (at pH 5.5)</KM>
        <KM evidence="7">2.33 uM for thiamine (at pH 5.5)</KM>
        <KM evidence="7">2.36 uM for thiamine (at pH 7.4)</KM>
        <Vmax evidence="10">414.0 pmol/min/mg enzyme for pyridoxine</Vmax>
        <Vmax evidence="7">264.0 pmol/min/mg enzyme for pyridoxine (at pH 5.5)</Vmax>
        <Vmax evidence="7">26.9 pmol/min/mg enzyme for thiamine (at pH 5.5)</Vmax>
        <Vmax evidence="7">65.9 pmol/min/mg enzyme for thiamine (at pH 7.4)</Vmax>
    </kinetics>
    <phDependence>
        <text evidence="4">Optimum pH is 7.5.</text>
    </phDependence>
</comment>
<comment type="interaction">
    <interactant intactId="EBI-3923779">
        <id>Q9BZV2</id>
    </interactant>
    <interactant intactId="EBI-12003442">
        <id>Q8WVX3-2</id>
        <label>C4orf3</label>
    </interactant>
    <organismsDiffer>false</organismsDiffer>
    <experiments>3</experiments>
</comment>
<comment type="interaction">
    <interactant intactId="EBI-3923779">
        <id>Q9BZV2</id>
    </interactant>
    <interactant intactId="EBI-8646596">
        <id>P49447</id>
        <label>CYB561</label>
    </interactant>
    <organismsDiffer>false</organismsDiffer>
    <experiments>3</experiments>
</comment>
<comment type="interaction">
    <interactant intactId="EBI-3923779">
        <id>Q9BZV2</id>
    </interactant>
    <interactant intactId="EBI-1752413">
        <id>P78329</id>
        <label>CYP4F2</label>
    </interactant>
    <organismsDiffer>false</organismsDiffer>
    <experiments>3</experiments>
</comment>
<comment type="interaction">
    <interactant intactId="EBI-3923779">
        <id>Q9BZV2</id>
    </interactant>
    <interactant intactId="EBI-18908258">
        <id>O00258</id>
        <label>GET1</label>
    </interactant>
    <organismsDiffer>false</organismsDiffer>
    <experiments>3</experiments>
</comment>
<comment type="interaction">
    <interactant intactId="EBI-3923779">
        <id>Q9BZV2</id>
    </interactant>
    <interactant intactId="EBI-8070286">
        <id>O43561-2</id>
        <label>LAT</label>
    </interactant>
    <organismsDiffer>false</organismsDiffer>
    <experiments>3</experiments>
</comment>
<comment type="interaction">
    <interactant intactId="EBI-3923779">
        <id>Q9BZV2</id>
    </interactant>
    <interactant intactId="EBI-12955265">
        <id>Q96GM1</id>
        <label>PLPPR2</label>
    </interactant>
    <organismsDiffer>false</organismsDiffer>
    <experiments>3</experiments>
</comment>
<comment type="interaction">
    <interactant intactId="EBI-3923779">
        <id>Q9BZV2</id>
    </interactant>
    <interactant intactId="EBI-941422">
        <id>P07204</id>
        <label>THBD</label>
    </interactant>
    <organismsDiffer>false</organismsDiffer>
    <experiments>3</experiments>
</comment>
<comment type="interaction">
    <interactant intactId="EBI-3923779">
        <id>Q9BZV2</id>
    </interactant>
    <interactant intactId="EBI-2800360">
        <id>Q9Y6G1</id>
        <label>TMEM14A</label>
    </interactant>
    <organismsDiffer>false</organismsDiffer>
    <experiments>3</experiments>
</comment>
<comment type="interaction">
    <interactant intactId="EBI-3923779">
        <id>Q9BZV2</id>
    </interactant>
    <interactant intactId="EBI-8638294">
        <id>Q9NUH8</id>
        <label>TMEM14B</label>
    </interactant>
    <organismsDiffer>false</organismsDiffer>
    <experiments>3</experiments>
</comment>
<comment type="interaction">
    <interactant intactId="EBI-3923779">
        <id>Q9BZV2</id>
    </interactant>
    <interactant intactId="EBI-10315004">
        <id>Q9NWH2</id>
        <label>TMEM242</label>
    </interactant>
    <organismsDiffer>false</organismsDiffer>
    <experiments>3</experiments>
</comment>
<comment type="interaction">
    <interactant intactId="EBI-3923779">
        <id>Q9BZV2</id>
    </interactant>
    <interactant intactId="EBI-718439">
        <id>O95159</id>
        <label>ZFPL1</label>
    </interactant>
    <organismsDiffer>false</organismsDiffer>
    <experiments>3</experiments>
</comment>
<comment type="subcellular location">
    <subcellularLocation>
        <location evidence="11">Membrane</location>
        <topology evidence="11">Multi-pass membrane protein</topology>
    </subcellularLocation>
</comment>
<comment type="tissue specificity">
    <text evidence="3 5">Widely expressed but most abundant in placenta, kidney and liver.</text>
</comment>
<comment type="disease" evidence="5">
    <disease id="DI-01284">
        <name>Basal ganglia disease, biotin-thiamine responsive</name>
        <acronym>BTBGD</acronym>
        <description>An autosomal recessive metabolic disorder characterized by episodic encephalopathy, often triggered by febrile illness, presenting as confusion, seizures, external ophthalmoplegia, dysphagia, and sometimes coma and death. If untreated, encephalopathies can result in permanent dystonia. Brain imaging may show characteristic bilateral lesions of the basal ganglia.</description>
        <dbReference type="MIM" id="607483"/>
    </disease>
    <text>The disease is caused by variants affecting the gene represented in this entry.</text>
</comment>
<comment type="similarity">
    <text evidence="11">Belongs to the reduced folate carrier (RFC) transporter (TC 2.A.48) family.</text>
</comment>